<gene>
    <name evidence="2" type="primary">rpsL</name>
    <name type="ordered locus">LBUL_0346</name>
</gene>
<dbReference type="EMBL" id="CP000412">
    <property type="protein sequence ID" value="ABJ58003.1"/>
    <property type="molecule type" value="Genomic_DNA"/>
</dbReference>
<dbReference type="RefSeq" id="WP_003613306.1">
    <property type="nucleotide sequence ID" value="NC_008529.1"/>
</dbReference>
<dbReference type="SMR" id="Q04C19"/>
<dbReference type="KEGG" id="lbu:LBUL_0346"/>
<dbReference type="HOGENOM" id="CLU_104295_1_1_9"/>
<dbReference type="BioCyc" id="LDEL321956:LBUL_RS01615-MONOMER"/>
<dbReference type="GO" id="GO:0015935">
    <property type="term" value="C:small ribosomal subunit"/>
    <property type="evidence" value="ECO:0007669"/>
    <property type="project" value="InterPro"/>
</dbReference>
<dbReference type="GO" id="GO:0019843">
    <property type="term" value="F:rRNA binding"/>
    <property type="evidence" value="ECO:0007669"/>
    <property type="project" value="UniProtKB-UniRule"/>
</dbReference>
<dbReference type="GO" id="GO:0003735">
    <property type="term" value="F:structural constituent of ribosome"/>
    <property type="evidence" value="ECO:0007669"/>
    <property type="project" value="InterPro"/>
</dbReference>
<dbReference type="GO" id="GO:0000049">
    <property type="term" value="F:tRNA binding"/>
    <property type="evidence" value="ECO:0007669"/>
    <property type="project" value="UniProtKB-UniRule"/>
</dbReference>
<dbReference type="GO" id="GO:0006412">
    <property type="term" value="P:translation"/>
    <property type="evidence" value="ECO:0007669"/>
    <property type="project" value="UniProtKB-UniRule"/>
</dbReference>
<dbReference type="CDD" id="cd03368">
    <property type="entry name" value="Ribosomal_S12"/>
    <property type="match status" value="1"/>
</dbReference>
<dbReference type="FunFam" id="2.40.50.140:FF:000001">
    <property type="entry name" value="30S ribosomal protein S12"/>
    <property type="match status" value="1"/>
</dbReference>
<dbReference type="Gene3D" id="2.40.50.140">
    <property type="entry name" value="Nucleic acid-binding proteins"/>
    <property type="match status" value="1"/>
</dbReference>
<dbReference type="HAMAP" id="MF_00403_B">
    <property type="entry name" value="Ribosomal_uS12_B"/>
    <property type="match status" value="1"/>
</dbReference>
<dbReference type="InterPro" id="IPR012340">
    <property type="entry name" value="NA-bd_OB-fold"/>
</dbReference>
<dbReference type="InterPro" id="IPR006032">
    <property type="entry name" value="Ribosomal_uS12"/>
</dbReference>
<dbReference type="InterPro" id="IPR005679">
    <property type="entry name" value="Ribosomal_uS12_bac"/>
</dbReference>
<dbReference type="NCBIfam" id="TIGR00981">
    <property type="entry name" value="rpsL_bact"/>
    <property type="match status" value="1"/>
</dbReference>
<dbReference type="PANTHER" id="PTHR11652">
    <property type="entry name" value="30S RIBOSOMAL PROTEIN S12 FAMILY MEMBER"/>
    <property type="match status" value="1"/>
</dbReference>
<dbReference type="Pfam" id="PF00164">
    <property type="entry name" value="Ribosom_S12_S23"/>
    <property type="match status" value="1"/>
</dbReference>
<dbReference type="PIRSF" id="PIRSF002133">
    <property type="entry name" value="Ribosomal_S12/S23"/>
    <property type="match status" value="1"/>
</dbReference>
<dbReference type="PRINTS" id="PR01034">
    <property type="entry name" value="RIBOSOMALS12"/>
</dbReference>
<dbReference type="SUPFAM" id="SSF50249">
    <property type="entry name" value="Nucleic acid-binding proteins"/>
    <property type="match status" value="1"/>
</dbReference>
<dbReference type="PROSITE" id="PS00055">
    <property type="entry name" value="RIBOSOMAL_S12"/>
    <property type="match status" value="1"/>
</dbReference>
<feature type="chain" id="PRO_0000295988" description="Small ribosomal subunit protein uS12">
    <location>
        <begin position="1"/>
        <end position="135"/>
    </location>
</feature>
<feature type="region of interest" description="Disordered" evidence="3">
    <location>
        <begin position="1"/>
        <end position="24"/>
    </location>
</feature>
<feature type="compositionally biased region" description="Basic residues" evidence="3">
    <location>
        <begin position="9"/>
        <end position="18"/>
    </location>
</feature>
<feature type="modified residue" description="3-methylthioaspartic acid" evidence="1">
    <location>
        <position position="102"/>
    </location>
</feature>
<protein>
    <recommendedName>
        <fullName evidence="2">Small ribosomal subunit protein uS12</fullName>
    </recommendedName>
    <alternativeName>
        <fullName evidence="4">30S ribosomal protein S12</fullName>
    </alternativeName>
</protein>
<proteinExistence type="inferred from homology"/>
<name>RS12_LACDB</name>
<keyword id="KW-0488">Methylation</keyword>
<keyword id="KW-0687">Ribonucleoprotein</keyword>
<keyword id="KW-0689">Ribosomal protein</keyword>
<keyword id="KW-0694">RNA-binding</keyword>
<keyword id="KW-0699">rRNA-binding</keyword>
<keyword id="KW-0820">tRNA-binding</keyword>
<organism>
    <name type="scientific">Lactobacillus delbrueckii subsp. bulgaricus (strain ATCC BAA-365 / Lb-18)</name>
    <dbReference type="NCBI Taxonomy" id="321956"/>
    <lineage>
        <taxon>Bacteria</taxon>
        <taxon>Bacillati</taxon>
        <taxon>Bacillota</taxon>
        <taxon>Bacilli</taxon>
        <taxon>Lactobacillales</taxon>
        <taxon>Lactobacillaceae</taxon>
        <taxon>Lactobacillus</taxon>
    </lineage>
</organism>
<reference key="1">
    <citation type="journal article" date="2006" name="Proc. Natl. Acad. Sci. U.S.A.">
        <title>Comparative genomics of the lactic acid bacteria.</title>
        <authorList>
            <person name="Makarova K.S."/>
            <person name="Slesarev A."/>
            <person name="Wolf Y.I."/>
            <person name="Sorokin A."/>
            <person name="Mirkin B."/>
            <person name="Koonin E.V."/>
            <person name="Pavlov A."/>
            <person name="Pavlova N."/>
            <person name="Karamychev V."/>
            <person name="Polouchine N."/>
            <person name="Shakhova V."/>
            <person name="Grigoriev I."/>
            <person name="Lou Y."/>
            <person name="Rohksar D."/>
            <person name="Lucas S."/>
            <person name="Huang K."/>
            <person name="Goodstein D.M."/>
            <person name="Hawkins T."/>
            <person name="Plengvidhya V."/>
            <person name="Welker D."/>
            <person name="Hughes J."/>
            <person name="Goh Y."/>
            <person name="Benson A."/>
            <person name="Baldwin K."/>
            <person name="Lee J.-H."/>
            <person name="Diaz-Muniz I."/>
            <person name="Dosti B."/>
            <person name="Smeianov V."/>
            <person name="Wechter W."/>
            <person name="Barabote R."/>
            <person name="Lorca G."/>
            <person name="Altermann E."/>
            <person name="Barrangou R."/>
            <person name="Ganesan B."/>
            <person name="Xie Y."/>
            <person name="Rawsthorne H."/>
            <person name="Tamir D."/>
            <person name="Parker C."/>
            <person name="Breidt F."/>
            <person name="Broadbent J.R."/>
            <person name="Hutkins R."/>
            <person name="O'Sullivan D."/>
            <person name="Steele J."/>
            <person name="Unlu G."/>
            <person name="Saier M.H. Jr."/>
            <person name="Klaenhammer T."/>
            <person name="Richardson P."/>
            <person name="Kozyavkin S."/>
            <person name="Weimer B.C."/>
            <person name="Mills D.A."/>
        </authorList>
    </citation>
    <scope>NUCLEOTIDE SEQUENCE [LARGE SCALE GENOMIC DNA]</scope>
    <source>
        <strain>ATCC BAA-365 / Lb-18</strain>
    </source>
</reference>
<comment type="function">
    <text evidence="2">With S4 and S5 plays an important role in translational accuracy.</text>
</comment>
<comment type="function">
    <text evidence="2">Interacts with and stabilizes bases of the 16S rRNA that are involved in tRNA selection in the A site and with the mRNA backbone. Located at the interface of the 30S and 50S subunits, it traverses the body of the 30S subunit contacting proteins on the other side and probably holding the rRNA structure together. The combined cluster of proteins S8, S12 and S17 appears to hold together the shoulder and platform of the 30S subunit.</text>
</comment>
<comment type="subunit">
    <text evidence="2">Part of the 30S ribosomal subunit. Contacts proteins S8 and S17. May interact with IF1 in the 30S initiation complex.</text>
</comment>
<comment type="similarity">
    <text evidence="2">Belongs to the universal ribosomal protein uS12 family.</text>
</comment>
<accession>Q04C19</accession>
<evidence type="ECO:0000250" key="1"/>
<evidence type="ECO:0000255" key="2">
    <source>
        <dbReference type="HAMAP-Rule" id="MF_00403"/>
    </source>
</evidence>
<evidence type="ECO:0000256" key="3">
    <source>
        <dbReference type="SAM" id="MobiDB-lite"/>
    </source>
</evidence>
<evidence type="ECO:0000305" key="4"/>
<sequence>MPTINQLVRKGRHSKTTKSKSPALNYSYNSMKKEQVFNPAPQMRGVATRVGTMTPKKPNSALRKYARVRLSNLTEVTAYIPGEGHNLQEHSVVLIRGGRVKDLPGVRYHIVRGALDTAGVDGRKQARSKYGAKKG</sequence>